<organism>
    <name type="scientific">Salmonella typhi</name>
    <dbReference type="NCBI Taxonomy" id="90370"/>
    <lineage>
        <taxon>Bacteria</taxon>
        <taxon>Pseudomonadati</taxon>
        <taxon>Pseudomonadota</taxon>
        <taxon>Gammaproteobacteria</taxon>
        <taxon>Enterobacterales</taxon>
        <taxon>Enterobacteriaceae</taxon>
        <taxon>Salmonella</taxon>
    </lineage>
</organism>
<keyword id="KW-0067">ATP-binding</keyword>
<keyword id="KW-0418">Kinase</keyword>
<keyword id="KW-0547">Nucleotide-binding</keyword>
<keyword id="KW-0808">Transferase</keyword>
<proteinExistence type="inferred from homology"/>
<name>THIK_SALTI</name>
<comment type="function">
    <text evidence="1">Catalyzes the ATP-dependent phosphorylation of thiamine to thiamine phosphate. Is involved in thiamine salvage.</text>
</comment>
<comment type="catalytic activity">
    <reaction evidence="1">
        <text>thiamine + ATP = thiamine phosphate + ADP + H(+)</text>
        <dbReference type="Rhea" id="RHEA:12012"/>
        <dbReference type="ChEBI" id="CHEBI:15378"/>
        <dbReference type="ChEBI" id="CHEBI:18385"/>
        <dbReference type="ChEBI" id="CHEBI:30616"/>
        <dbReference type="ChEBI" id="CHEBI:37575"/>
        <dbReference type="ChEBI" id="CHEBI:456216"/>
        <dbReference type="EC" id="2.7.1.89"/>
    </reaction>
    <physiologicalReaction direction="left-to-right" evidence="1">
        <dbReference type="Rhea" id="RHEA:12013"/>
    </physiologicalReaction>
</comment>
<comment type="pathway">
    <text evidence="1">Cofactor biosynthesis; thiamine diphosphate biosynthesis; thiamine phosphate from thiamine: step 1/1.</text>
</comment>
<comment type="similarity">
    <text evidence="1">Belongs to the thiamine kinase family.</text>
</comment>
<protein>
    <recommendedName>
        <fullName evidence="1">Thiamine kinase</fullName>
        <ecNumber evidence="1">2.7.1.89</ecNumber>
    </recommendedName>
</protein>
<feature type="chain" id="PRO_0000218061" description="Thiamine kinase">
    <location>
        <begin position="1"/>
        <end position="274"/>
    </location>
</feature>
<accession>Q8Z7I7</accession>
<accession>Q7C9D3</accession>
<gene>
    <name evidence="1" type="primary">thiK</name>
    <name type="ordered locus">STY1248</name>
    <name type="ordered locus">t1712</name>
</gene>
<evidence type="ECO:0000255" key="1">
    <source>
        <dbReference type="HAMAP-Rule" id="MF_01604"/>
    </source>
</evidence>
<dbReference type="EC" id="2.7.1.89" evidence="1"/>
<dbReference type="EMBL" id="AL513382">
    <property type="protein sequence ID" value="CAD08332.1"/>
    <property type="molecule type" value="Genomic_DNA"/>
</dbReference>
<dbReference type="EMBL" id="AE014613">
    <property type="protein sequence ID" value="AAO69337.1"/>
    <property type="molecule type" value="Genomic_DNA"/>
</dbReference>
<dbReference type="RefSeq" id="NP_455700.1">
    <property type="nucleotide sequence ID" value="NC_003198.1"/>
</dbReference>
<dbReference type="RefSeq" id="WP_001257320.1">
    <property type="nucleotide sequence ID" value="NZ_WSUR01000030.1"/>
</dbReference>
<dbReference type="SMR" id="Q8Z7I7"/>
<dbReference type="STRING" id="220341.gene:17585212"/>
<dbReference type="KEGG" id="stt:t1712"/>
<dbReference type="KEGG" id="sty:STY1248"/>
<dbReference type="PATRIC" id="fig|220341.7.peg.1250"/>
<dbReference type="eggNOG" id="COG0510">
    <property type="taxonomic scope" value="Bacteria"/>
</dbReference>
<dbReference type="HOGENOM" id="CLU_055115_2_1_6"/>
<dbReference type="OMA" id="LMAGWYE"/>
<dbReference type="OrthoDB" id="179763at2"/>
<dbReference type="UniPathway" id="UPA00060">
    <property type="reaction ID" value="UER00596"/>
</dbReference>
<dbReference type="Proteomes" id="UP000000541">
    <property type="component" value="Chromosome"/>
</dbReference>
<dbReference type="Proteomes" id="UP000002670">
    <property type="component" value="Chromosome"/>
</dbReference>
<dbReference type="GO" id="GO:0005524">
    <property type="term" value="F:ATP binding"/>
    <property type="evidence" value="ECO:0007669"/>
    <property type="project" value="UniProtKB-KW"/>
</dbReference>
<dbReference type="GO" id="GO:0019165">
    <property type="term" value="F:thiamine kinase activity"/>
    <property type="evidence" value="ECO:0007669"/>
    <property type="project" value="UniProtKB-UniRule"/>
</dbReference>
<dbReference type="GO" id="GO:0009229">
    <property type="term" value="P:thiamine diphosphate biosynthetic process"/>
    <property type="evidence" value="ECO:0007669"/>
    <property type="project" value="UniProtKB-UniRule"/>
</dbReference>
<dbReference type="GO" id="GO:0006772">
    <property type="term" value="P:thiamine metabolic process"/>
    <property type="evidence" value="ECO:0007669"/>
    <property type="project" value="InterPro"/>
</dbReference>
<dbReference type="Gene3D" id="3.90.1200.10">
    <property type="match status" value="1"/>
</dbReference>
<dbReference type="HAMAP" id="MF_01604">
    <property type="entry name" value="Thiamine_kinase"/>
    <property type="match status" value="1"/>
</dbReference>
<dbReference type="InterPro" id="IPR002575">
    <property type="entry name" value="Aminoglycoside_PTrfase"/>
</dbReference>
<dbReference type="InterPro" id="IPR011009">
    <property type="entry name" value="Kinase-like_dom_sf"/>
</dbReference>
<dbReference type="InterPro" id="IPR014093">
    <property type="entry name" value="Thiamine_kinase"/>
</dbReference>
<dbReference type="NCBIfam" id="NF007620">
    <property type="entry name" value="PRK10271.1"/>
    <property type="match status" value="1"/>
</dbReference>
<dbReference type="NCBIfam" id="TIGR02721">
    <property type="entry name" value="ycfN_thiK"/>
    <property type="match status" value="1"/>
</dbReference>
<dbReference type="Pfam" id="PF01636">
    <property type="entry name" value="APH"/>
    <property type="match status" value="1"/>
</dbReference>
<dbReference type="SUPFAM" id="SSF56112">
    <property type="entry name" value="Protein kinase-like (PK-like)"/>
    <property type="match status" value="1"/>
</dbReference>
<sequence>MRSNNNNPLTRDEILSRYFPQYRPAVAASQGLSGGSCIIAHDTHRIVLRRHHDPDAPPAHFLRHHRALSQLPASLAPRALFYTPGWMAVEYLHGVVNSALPDADELAALLYHLHQQPRFGWRIALSPLLAQYWSCCDPARRTPFWLRRLKQLQKNGEPRPLRLAPLHMDVHGDNIVLTSAGLRLIDWEYAGDGDIALELAAVWVEDERQHRQLADAYAARARIDARQLWRQIRLWHPWVIMLKAGWFEYRWRQTGEQQFIRLADETWRQLRMKG</sequence>
<reference key="1">
    <citation type="journal article" date="2001" name="Nature">
        <title>Complete genome sequence of a multiple drug resistant Salmonella enterica serovar Typhi CT18.</title>
        <authorList>
            <person name="Parkhill J."/>
            <person name="Dougan G."/>
            <person name="James K.D."/>
            <person name="Thomson N.R."/>
            <person name="Pickard D."/>
            <person name="Wain J."/>
            <person name="Churcher C.M."/>
            <person name="Mungall K.L."/>
            <person name="Bentley S.D."/>
            <person name="Holden M.T.G."/>
            <person name="Sebaihia M."/>
            <person name="Baker S."/>
            <person name="Basham D."/>
            <person name="Brooks K."/>
            <person name="Chillingworth T."/>
            <person name="Connerton P."/>
            <person name="Cronin A."/>
            <person name="Davis P."/>
            <person name="Davies R.M."/>
            <person name="Dowd L."/>
            <person name="White N."/>
            <person name="Farrar J."/>
            <person name="Feltwell T."/>
            <person name="Hamlin N."/>
            <person name="Haque A."/>
            <person name="Hien T.T."/>
            <person name="Holroyd S."/>
            <person name="Jagels K."/>
            <person name="Krogh A."/>
            <person name="Larsen T.S."/>
            <person name="Leather S."/>
            <person name="Moule S."/>
            <person name="O'Gaora P."/>
            <person name="Parry C."/>
            <person name="Quail M.A."/>
            <person name="Rutherford K.M."/>
            <person name="Simmonds M."/>
            <person name="Skelton J."/>
            <person name="Stevens K."/>
            <person name="Whitehead S."/>
            <person name="Barrell B.G."/>
        </authorList>
    </citation>
    <scope>NUCLEOTIDE SEQUENCE [LARGE SCALE GENOMIC DNA]</scope>
    <source>
        <strain>CT18</strain>
    </source>
</reference>
<reference key="2">
    <citation type="journal article" date="2003" name="J. Bacteriol.">
        <title>Comparative genomics of Salmonella enterica serovar Typhi strains Ty2 and CT18.</title>
        <authorList>
            <person name="Deng W."/>
            <person name="Liou S.-R."/>
            <person name="Plunkett G. III"/>
            <person name="Mayhew G.F."/>
            <person name="Rose D.J."/>
            <person name="Burland V."/>
            <person name="Kodoyianni V."/>
            <person name="Schwartz D.C."/>
            <person name="Blattner F.R."/>
        </authorList>
    </citation>
    <scope>NUCLEOTIDE SEQUENCE [LARGE SCALE GENOMIC DNA]</scope>
    <source>
        <strain>ATCC 700931 / Ty2</strain>
    </source>
</reference>